<sequence>MANHKSALKRHRQSIKRNLRNNMVRTRIKNVVKEVRSAVEANDTELAATALRKATSVLDKAATKKVIHARAAARRISRLSAAVNKMA</sequence>
<evidence type="ECO:0000255" key="1">
    <source>
        <dbReference type="HAMAP-Rule" id="MF_00500"/>
    </source>
</evidence>
<evidence type="ECO:0000256" key="2">
    <source>
        <dbReference type="SAM" id="MobiDB-lite"/>
    </source>
</evidence>
<evidence type="ECO:0000305" key="3"/>
<name>RS20_MARSD</name>
<protein>
    <recommendedName>
        <fullName evidence="1">Small ribosomal subunit protein bS20</fullName>
    </recommendedName>
    <alternativeName>
        <fullName evidence="3">30S ribosomal protein S20</fullName>
    </alternativeName>
</protein>
<gene>
    <name evidence="1" type="primary">rpsT</name>
    <name type="ordered locus">Desal_1981</name>
</gene>
<accession>C6BV66</accession>
<feature type="chain" id="PRO_1000206494" description="Small ribosomal subunit protein bS20">
    <location>
        <begin position="1"/>
        <end position="87"/>
    </location>
</feature>
<feature type="region of interest" description="Disordered" evidence="2">
    <location>
        <begin position="1"/>
        <end position="22"/>
    </location>
</feature>
<feature type="compositionally biased region" description="Basic residues" evidence="2">
    <location>
        <begin position="1"/>
        <end position="19"/>
    </location>
</feature>
<organism>
    <name type="scientific">Maridesulfovibrio salexigens (strain ATCC 14822 / DSM 2638 / NCIMB 8403 / VKM B-1763)</name>
    <name type="common">Desulfovibrio salexigens</name>
    <dbReference type="NCBI Taxonomy" id="526222"/>
    <lineage>
        <taxon>Bacteria</taxon>
        <taxon>Pseudomonadati</taxon>
        <taxon>Thermodesulfobacteriota</taxon>
        <taxon>Desulfovibrionia</taxon>
        <taxon>Desulfovibrionales</taxon>
        <taxon>Desulfovibrionaceae</taxon>
        <taxon>Maridesulfovibrio</taxon>
    </lineage>
</organism>
<comment type="function">
    <text evidence="1">Binds directly to 16S ribosomal RNA.</text>
</comment>
<comment type="similarity">
    <text evidence="1">Belongs to the bacterial ribosomal protein bS20 family.</text>
</comment>
<proteinExistence type="inferred from homology"/>
<reference key="1">
    <citation type="submission" date="2009-06" db="EMBL/GenBank/DDBJ databases">
        <title>Complete sequence of Desulfovibrio salexigens DSM 2638.</title>
        <authorList>
            <consortium name="US DOE Joint Genome Institute"/>
            <person name="Lucas S."/>
            <person name="Copeland A."/>
            <person name="Lapidus A."/>
            <person name="Glavina del Rio T."/>
            <person name="Tice H."/>
            <person name="Bruce D."/>
            <person name="Goodwin L."/>
            <person name="Pitluck S."/>
            <person name="Munk A.C."/>
            <person name="Brettin T."/>
            <person name="Detter J.C."/>
            <person name="Han C."/>
            <person name="Tapia R."/>
            <person name="Larimer F."/>
            <person name="Land M."/>
            <person name="Hauser L."/>
            <person name="Kyrpides N."/>
            <person name="Anderson I."/>
            <person name="Wall J.D."/>
            <person name="Arkin A.P."/>
            <person name="Dehal P."/>
            <person name="Chivian D."/>
            <person name="Giles B."/>
            <person name="Hazen T.C."/>
        </authorList>
    </citation>
    <scope>NUCLEOTIDE SEQUENCE [LARGE SCALE GENOMIC DNA]</scope>
    <source>
        <strain>ATCC 14822 / DSM 2638 / NCIMB 8403 / VKM B-1763</strain>
    </source>
</reference>
<dbReference type="EMBL" id="CP001649">
    <property type="protein sequence ID" value="ACS80041.1"/>
    <property type="molecule type" value="Genomic_DNA"/>
</dbReference>
<dbReference type="RefSeq" id="WP_015851857.1">
    <property type="nucleotide sequence ID" value="NC_012881.1"/>
</dbReference>
<dbReference type="SMR" id="C6BV66"/>
<dbReference type="STRING" id="526222.Desal_1981"/>
<dbReference type="KEGG" id="dsa:Desal_1981"/>
<dbReference type="eggNOG" id="COG0268">
    <property type="taxonomic scope" value="Bacteria"/>
</dbReference>
<dbReference type="HOGENOM" id="CLU_160655_3_1_7"/>
<dbReference type="OrthoDB" id="9807974at2"/>
<dbReference type="Proteomes" id="UP000002601">
    <property type="component" value="Chromosome"/>
</dbReference>
<dbReference type="GO" id="GO:0005829">
    <property type="term" value="C:cytosol"/>
    <property type="evidence" value="ECO:0007669"/>
    <property type="project" value="TreeGrafter"/>
</dbReference>
<dbReference type="GO" id="GO:0015935">
    <property type="term" value="C:small ribosomal subunit"/>
    <property type="evidence" value="ECO:0007669"/>
    <property type="project" value="TreeGrafter"/>
</dbReference>
<dbReference type="GO" id="GO:0070181">
    <property type="term" value="F:small ribosomal subunit rRNA binding"/>
    <property type="evidence" value="ECO:0007669"/>
    <property type="project" value="TreeGrafter"/>
</dbReference>
<dbReference type="GO" id="GO:0003735">
    <property type="term" value="F:structural constituent of ribosome"/>
    <property type="evidence" value="ECO:0007669"/>
    <property type="project" value="InterPro"/>
</dbReference>
<dbReference type="GO" id="GO:0006412">
    <property type="term" value="P:translation"/>
    <property type="evidence" value="ECO:0007669"/>
    <property type="project" value="UniProtKB-UniRule"/>
</dbReference>
<dbReference type="FunFam" id="1.20.58.110:FF:000001">
    <property type="entry name" value="30S ribosomal protein S20"/>
    <property type="match status" value="1"/>
</dbReference>
<dbReference type="Gene3D" id="1.20.58.110">
    <property type="entry name" value="Ribosomal protein S20"/>
    <property type="match status" value="1"/>
</dbReference>
<dbReference type="HAMAP" id="MF_00500">
    <property type="entry name" value="Ribosomal_bS20"/>
    <property type="match status" value="1"/>
</dbReference>
<dbReference type="InterPro" id="IPR002583">
    <property type="entry name" value="Ribosomal_bS20"/>
</dbReference>
<dbReference type="InterPro" id="IPR036510">
    <property type="entry name" value="Ribosomal_bS20_sf"/>
</dbReference>
<dbReference type="NCBIfam" id="TIGR00029">
    <property type="entry name" value="S20"/>
    <property type="match status" value="1"/>
</dbReference>
<dbReference type="PANTHER" id="PTHR33398">
    <property type="entry name" value="30S RIBOSOMAL PROTEIN S20"/>
    <property type="match status" value="1"/>
</dbReference>
<dbReference type="PANTHER" id="PTHR33398:SF1">
    <property type="entry name" value="SMALL RIBOSOMAL SUBUNIT PROTEIN BS20C"/>
    <property type="match status" value="1"/>
</dbReference>
<dbReference type="Pfam" id="PF01649">
    <property type="entry name" value="Ribosomal_S20p"/>
    <property type="match status" value="1"/>
</dbReference>
<dbReference type="SUPFAM" id="SSF46992">
    <property type="entry name" value="Ribosomal protein S20"/>
    <property type="match status" value="1"/>
</dbReference>
<keyword id="KW-1185">Reference proteome</keyword>
<keyword id="KW-0687">Ribonucleoprotein</keyword>
<keyword id="KW-0689">Ribosomal protein</keyword>
<keyword id="KW-0694">RNA-binding</keyword>
<keyword id="KW-0699">rRNA-binding</keyword>